<dbReference type="EC" id="1.97.1.12" evidence="1"/>
<dbReference type="EMBL" id="DQ923117">
    <property type="protein sequence ID" value="ABI49862.1"/>
    <property type="molecule type" value="Genomic_DNA"/>
</dbReference>
<dbReference type="RefSeq" id="YP_740649.1">
    <property type="nucleotide sequence ID" value="NC_008336.1"/>
</dbReference>
<dbReference type="SMR" id="Q09FW2"/>
<dbReference type="GeneID" id="4271590"/>
<dbReference type="GO" id="GO:0009535">
    <property type="term" value="C:chloroplast thylakoid membrane"/>
    <property type="evidence" value="ECO:0007669"/>
    <property type="project" value="UniProtKB-SubCell"/>
</dbReference>
<dbReference type="GO" id="GO:0009522">
    <property type="term" value="C:photosystem I"/>
    <property type="evidence" value="ECO:0007669"/>
    <property type="project" value="UniProtKB-KW"/>
</dbReference>
<dbReference type="GO" id="GO:0051539">
    <property type="term" value="F:4 iron, 4 sulfur cluster binding"/>
    <property type="evidence" value="ECO:0007669"/>
    <property type="project" value="UniProtKB-KW"/>
</dbReference>
<dbReference type="GO" id="GO:0016168">
    <property type="term" value="F:chlorophyll binding"/>
    <property type="evidence" value="ECO:0007669"/>
    <property type="project" value="UniProtKB-KW"/>
</dbReference>
<dbReference type="GO" id="GO:0009055">
    <property type="term" value="F:electron transfer activity"/>
    <property type="evidence" value="ECO:0007669"/>
    <property type="project" value="UniProtKB-UniRule"/>
</dbReference>
<dbReference type="GO" id="GO:0000287">
    <property type="term" value="F:magnesium ion binding"/>
    <property type="evidence" value="ECO:0007669"/>
    <property type="project" value="UniProtKB-UniRule"/>
</dbReference>
<dbReference type="GO" id="GO:0016491">
    <property type="term" value="F:oxidoreductase activity"/>
    <property type="evidence" value="ECO:0007669"/>
    <property type="project" value="UniProtKB-KW"/>
</dbReference>
<dbReference type="GO" id="GO:0015979">
    <property type="term" value="P:photosynthesis"/>
    <property type="evidence" value="ECO:0007669"/>
    <property type="project" value="UniProtKB-UniRule"/>
</dbReference>
<dbReference type="FunFam" id="1.20.1130.10:FF:000001">
    <property type="entry name" value="Photosystem I P700 chlorophyll a apoprotein A2"/>
    <property type="match status" value="1"/>
</dbReference>
<dbReference type="Gene3D" id="1.20.1130.10">
    <property type="entry name" value="Photosystem I PsaA/PsaB"/>
    <property type="match status" value="1"/>
</dbReference>
<dbReference type="HAMAP" id="MF_00482">
    <property type="entry name" value="PSI_PsaB"/>
    <property type="match status" value="1"/>
</dbReference>
<dbReference type="InterPro" id="IPR001280">
    <property type="entry name" value="PSI_PsaA/B"/>
</dbReference>
<dbReference type="InterPro" id="IPR020586">
    <property type="entry name" value="PSI_PsaA/B_CS"/>
</dbReference>
<dbReference type="InterPro" id="IPR036408">
    <property type="entry name" value="PSI_PsaA/B_sf"/>
</dbReference>
<dbReference type="InterPro" id="IPR006244">
    <property type="entry name" value="PSI_PsaB"/>
</dbReference>
<dbReference type="NCBIfam" id="TIGR01336">
    <property type="entry name" value="psaB"/>
    <property type="match status" value="1"/>
</dbReference>
<dbReference type="PANTHER" id="PTHR30128">
    <property type="entry name" value="OUTER MEMBRANE PROTEIN, OMPA-RELATED"/>
    <property type="match status" value="1"/>
</dbReference>
<dbReference type="PANTHER" id="PTHR30128:SF19">
    <property type="entry name" value="PHOTOSYSTEM I P700 CHLOROPHYLL A APOPROTEIN A1-RELATED"/>
    <property type="match status" value="1"/>
</dbReference>
<dbReference type="Pfam" id="PF00223">
    <property type="entry name" value="PsaA_PsaB"/>
    <property type="match status" value="1"/>
</dbReference>
<dbReference type="PIRSF" id="PIRSF002905">
    <property type="entry name" value="PSI_A"/>
    <property type="match status" value="1"/>
</dbReference>
<dbReference type="PRINTS" id="PR00257">
    <property type="entry name" value="PHOTSYSPSAAB"/>
</dbReference>
<dbReference type="SUPFAM" id="SSF81558">
    <property type="entry name" value="Photosystem I subunits PsaA/PsaB"/>
    <property type="match status" value="1"/>
</dbReference>
<dbReference type="PROSITE" id="PS00419">
    <property type="entry name" value="PHOTOSYSTEM_I_PSAAB"/>
    <property type="match status" value="1"/>
</dbReference>
<name>PSAB_NANDO</name>
<evidence type="ECO:0000255" key="1">
    <source>
        <dbReference type="HAMAP-Rule" id="MF_00482"/>
    </source>
</evidence>
<sequence length="734" mass="82426">MALRFPRFSQGLAQDPTTRRIWFGIATAHDFESHDDITEERLYQNIFASHFGQLAIIFLWTSGNLFHVAWQGNFESWVQDPLHVRPIAHAIWDPHFGQPAVEAFTRGGALGPVNIAYSGVYQWWYTIGLRTNEDLYTGALFLLFLSAISLIAGWLHLQPKWKPSVSWFKNAESRLNHHLSGLFGVSSLAWTGHLVHVAIPGSRGEYVRWNNFLDVLPHPQGLGPLFTGQWNLYAQNPDSGSHLFGTSQGAGTAILTLLGGFHPQTQSLWLTDMAHHHLAIAFIFLVAGHMYRTNFGIGHSMKDLLEAHIPPGGRLGRGHKGLYDTINNSIHFQLGLALASLGVITSLVAQHMYSLPAYAFIAQDFTTQAALYTHHQYIAGFIMTGAFAHGAIFFIRDYNPEQNEDNVLARMLDHKEAIISHLSWASLFLGFHTLGLYVHNDVMLAFGTPEKQILIEPIFAQWIQSAHGKTSYGFDVLLSSTNGPAFNAGRSIWLPGWLNAVNENSNSLFLTIGPGDFLVHHAIALGLHTTTLILVKGALDARGSKLMPDKKDFGYSFPCDGPGRGGTCDISAWDAFYLAVFWMLNTIGWVTFYWHWKHITLWQGNVSQFNESSTYLMGWLRDYLWLNSSQLINGYNPFGMNSLSVWAWMFLFGHLVWATGFMFLISWRGYWQELIETLAWAHERTPLANLIRWRDKPVALSIVQARLVGLAHFSVGYIFTYAAFLIASTSGKFG</sequence>
<organism>
    <name type="scientific">Nandina domestica</name>
    <name type="common">Heavenly bamboo</name>
    <dbReference type="NCBI Taxonomy" id="41776"/>
    <lineage>
        <taxon>Eukaryota</taxon>
        <taxon>Viridiplantae</taxon>
        <taxon>Streptophyta</taxon>
        <taxon>Embryophyta</taxon>
        <taxon>Tracheophyta</taxon>
        <taxon>Spermatophyta</taxon>
        <taxon>Magnoliopsida</taxon>
        <taxon>Ranunculales</taxon>
        <taxon>Berberidaceae</taxon>
        <taxon>Nandinoideae</taxon>
        <taxon>Nandineae</taxon>
        <taxon>Nandina</taxon>
    </lineage>
</organism>
<reference key="1">
    <citation type="journal article" date="2006" name="BMC Plant Biol.">
        <title>Rapid and accurate pyrosequencing of angiosperm plastid genomes.</title>
        <authorList>
            <person name="Moore M.J."/>
            <person name="Dhingra A."/>
            <person name="Soltis P.S."/>
            <person name="Shaw R."/>
            <person name="Farmerie W.G."/>
            <person name="Folta K.M."/>
            <person name="Soltis D.E."/>
        </authorList>
    </citation>
    <scope>NUCLEOTIDE SEQUENCE [LARGE SCALE GENOMIC DNA]</scope>
</reference>
<protein>
    <recommendedName>
        <fullName evidence="1">Photosystem I P700 chlorophyll a apoprotein A2</fullName>
        <ecNumber evidence="1">1.97.1.12</ecNumber>
    </recommendedName>
    <alternativeName>
        <fullName evidence="1">PSI-B</fullName>
    </alternativeName>
    <alternativeName>
        <fullName evidence="1">PsaB</fullName>
    </alternativeName>
</protein>
<keyword id="KW-0004">4Fe-4S</keyword>
<keyword id="KW-0148">Chlorophyll</keyword>
<keyword id="KW-0150">Chloroplast</keyword>
<keyword id="KW-0157">Chromophore</keyword>
<keyword id="KW-0249">Electron transport</keyword>
<keyword id="KW-0408">Iron</keyword>
<keyword id="KW-0411">Iron-sulfur</keyword>
<keyword id="KW-0460">Magnesium</keyword>
<keyword id="KW-0472">Membrane</keyword>
<keyword id="KW-0479">Metal-binding</keyword>
<keyword id="KW-0560">Oxidoreductase</keyword>
<keyword id="KW-0602">Photosynthesis</keyword>
<keyword id="KW-0603">Photosystem I</keyword>
<keyword id="KW-0934">Plastid</keyword>
<keyword id="KW-0793">Thylakoid</keyword>
<keyword id="KW-0812">Transmembrane</keyword>
<keyword id="KW-1133">Transmembrane helix</keyword>
<keyword id="KW-0813">Transport</keyword>
<comment type="function">
    <text evidence="1">PsaA and PsaB bind P700, the primary electron donor of photosystem I (PSI), as well as the electron acceptors A0, A1 and FX. PSI is a plastocyanin-ferredoxin oxidoreductase, converting photonic excitation into a charge separation, which transfers an electron from the donor P700 chlorophyll pair to the spectroscopically characterized acceptors A0, A1, FX, FA and FB in turn. Oxidized P700 is reduced on the lumenal side of the thylakoid membrane by plastocyanin.</text>
</comment>
<comment type="catalytic activity">
    <reaction evidence="1">
        <text>reduced [plastocyanin] + hnu + oxidized [2Fe-2S]-[ferredoxin] = oxidized [plastocyanin] + reduced [2Fe-2S]-[ferredoxin]</text>
        <dbReference type="Rhea" id="RHEA:30407"/>
        <dbReference type="Rhea" id="RHEA-COMP:10000"/>
        <dbReference type="Rhea" id="RHEA-COMP:10001"/>
        <dbReference type="Rhea" id="RHEA-COMP:10039"/>
        <dbReference type="Rhea" id="RHEA-COMP:10040"/>
        <dbReference type="ChEBI" id="CHEBI:29036"/>
        <dbReference type="ChEBI" id="CHEBI:30212"/>
        <dbReference type="ChEBI" id="CHEBI:33737"/>
        <dbReference type="ChEBI" id="CHEBI:33738"/>
        <dbReference type="ChEBI" id="CHEBI:49552"/>
        <dbReference type="EC" id="1.97.1.12"/>
    </reaction>
</comment>
<comment type="cofactor">
    <text evidence="1">P700 is a chlorophyll a/chlorophyll a' dimer, A0 is one or more chlorophyll a, A1 is one or both phylloquinones and FX is a shared 4Fe-4S iron-sulfur center.</text>
</comment>
<comment type="subunit">
    <text evidence="1">The PsaA/B heterodimer binds the P700 chlorophyll special pair and subsequent electron acceptors. PSI consists of a core antenna complex that captures photons, and an electron transfer chain that converts photonic excitation into a charge separation. The eukaryotic PSI reaction center is composed of at least 11 subunits.</text>
</comment>
<comment type="subcellular location">
    <subcellularLocation>
        <location evidence="1">Plastid</location>
        <location evidence="1">Chloroplast thylakoid membrane</location>
        <topology evidence="1">Multi-pass membrane protein</topology>
    </subcellularLocation>
</comment>
<comment type="similarity">
    <text evidence="1">Belongs to the PsaA/PsaB family.</text>
</comment>
<proteinExistence type="inferred from homology"/>
<geneLocation type="chloroplast"/>
<accession>Q09FW2</accession>
<gene>
    <name evidence="1" type="primary">psaB</name>
</gene>
<feature type="chain" id="PRO_0000300050" description="Photosystem I P700 chlorophyll a apoprotein A2">
    <location>
        <begin position="1"/>
        <end position="734"/>
    </location>
</feature>
<feature type="transmembrane region" description="Helical; Name=I" evidence="1">
    <location>
        <begin position="46"/>
        <end position="69"/>
    </location>
</feature>
<feature type="transmembrane region" description="Helical; Name=II" evidence="1">
    <location>
        <begin position="135"/>
        <end position="158"/>
    </location>
</feature>
<feature type="transmembrane region" description="Helical; Name=III" evidence="1">
    <location>
        <begin position="175"/>
        <end position="199"/>
    </location>
</feature>
<feature type="transmembrane region" description="Helical; Name=IV" evidence="1">
    <location>
        <begin position="273"/>
        <end position="291"/>
    </location>
</feature>
<feature type="transmembrane region" description="Helical; Name=V" evidence="1">
    <location>
        <begin position="330"/>
        <end position="353"/>
    </location>
</feature>
<feature type="transmembrane region" description="Helical; Name=VI" evidence="1">
    <location>
        <begin position="369"/>
        <end position="395"/>
    </location>
</feature>
<feature type="transmembrane region" description="Helical; Name=VII" evidence="1">
    <location>
        <begin position="417"/>
        <end position="439"/>
    </location>
</feature>
<feature type="transmembrane region" description="Helical; Name=VIII" evidence="1">
    <location>
        <begin position="517"/>
        <end position="535"/>
    </location>
</feature>
<feature type="transmembrane region" description="Helical; Name=IX" evidence="1">
    <location>
        <begin position="575"/>
        <end position="596"/>
    </location>
</feature>
<feature type="transmembrane region" description="Helical; Name=X" evidence="1">
    <location>
        <begin position="643"/>
        <end position="665"/>
    </location>
</feature>
<feature type="transmembrane region" description="Helical; Name=XI" evidence="1">
    <location>
        <begin position="707"/>
        <end position="727"/>
    </location>
</feature>
<feature type="binding site" evidence="1">
    <location>
        <position position="559"/>
    </location>
    <ligand>
        <name>[4Fe-4S] cluster</name>
        <dbReference type="ChEBI" id="CHEBI:49883"/>
        <note>ligand shared between dimeric partners</note>
    </ligand>
</feature>
<feature type="binding site" evidence="1">
    <location>
        <position position="568"/>
    </location>
    <ligand>
        <name>[4Fe-4S] cluster</name>
        <dbReference type="ChEBI" id="CHEBI:49883"/>
        <note>ligand shared between dimeric partners</note>
    </ligand>
</feature>
<feature type="binding site" description="axial binding residue" evidence="1">
    <location>
        <position position="654"/>
    </location>
    <ligand>
        <name>chlorophyll a</name>
        <dbReference type="ChEBI" id="CHEBI:58416"/>
        <label>B1</label>
    </ligand>
    <ligandPart>
        <name>Mg</name>
        <dbReference type="ChEBI" id="CHEBI:25107"/>
    </ligandPart>
</feature>
<feature type="binding site" description="axial binding residue" evidence="1">
    <location>
        <position position="662"/>
    </location>
    <ligand>
        <name>chlorophyll a</name>
        <dbReference type="ChEBI" id="CHEBI:58416"/>
        <label>B3</label>
    </ligand>
    <ligandPart>
        <name>Mg</name>
        <dbReference type="ChEBI" id="CHEBI:25107"/>
    </ligandPart>
</feature>
<feature type="binding site" evidence="1">
    <location>
        <position position="670"/>
    </location>
    <ligand>
        <name>chlorophyll a</name>
        <dbReference type="ChEBI" id="CHEBI:58416"/>
        <label>B3</label>
    </ligand>
</feature>
<feature type="binding site" evidence="1">
    <location>
        <position position="671"/>
    </location>
    <ligand>
        <name>phylloquinone</name>
        <dbReference type="ChEBI" id="CHEBI:18067"/>
        <label>B</label>
    </ligand>
</feature>